<keyword id="KW-1185">Reference proteome</keyword>
<keyword id="KW-0686">Riboflavin biosynthesis</keyword>
<keyword id="KW-0808">Transferase</keyword>
<gene>
    <name evidence="1" type="primary">ribH</name>
    <name type="ordered locus">Msil_0660</name>
</gene>
<accession>B8ENB9</accession>
<proteinExistence type="inferred from homology"/>
<comment type="function">
    <text evidence="1">Catalyzes the formation of 6,7-dimethyl-8-ribityllumazine by condensation of 5-amino-6-(D-ribitylamino)uracil with 3,4-dihydroxy-2-butanone 4-phosphate. This is the penultimate step in the biosynthesis of riboflavin.</text>
</comment>
<comment type="catalytic activity">
    <reaction evidence="1">
        <text>(2S)-2-hydroxy-3-oxobutyl phosphate + 5-amino-6-(D-ribitylamino)uracil = 6,7-dimethyl-8-(1-D-ribityl)lumazine + phosphate + 2 H2O + H(+)</text>
        <dbReference type="Rhea" id="RHEA:26152"/>
        <dbReference type="ChEBI" id="CHEBI:15377"/>
        <dbReference type="ChEBI" id="CHEBI:15378"/>
        <dbReference type="ChEBI" id="CHEBI:15934"/>
        <dbReference type="ChEBI" id="CHEBI:43474"/>
        <dbReference type="ChEBI" id="CHEBI:58201"/>
        <dbReference type="ChEBI" id="CHEBI:58830"/>
        <dbReference type="EC" id="2.5.1.78"/>
    </reaction>
</comment>
<comment type="pathway">
    <text evidence="1">Cofactor biosynthesis; riboflavin biosynthesis; riboflavin from 2-hydroxy-3-oxobutyl phosphate and 5-amino-6-(D-ribitylamino)uracil: step 1/2.</text>
</comment>
<comment type="similarity">
    <text evidence="1">Belongs to the DMRL synthase family.</text>
</comment>
<dbReference type="EC" id="2.5.1.78" evidence="1"/>
<dbReference type="EMBL" id="CP001280">
    <property type="protein sequence ID" value="ACK49632.1"/>
    <property type="molecule type" value="Genomic_DNA"/>
</dbReference>
<dbReference type="RefSeq" id="WP_012589702.1">
    <property type="nucleotide sequence ID" value="NC_011666.1"/>
</dbReference>
<dbReference type="SMR" id="B8ENB9"/>
<dbReference type="STRING" id="395965.Msil_0660"/>
<dbReference type="KEGG" id="msl:Msil_0660"/>
<dbReference type="eggNOG" id="COG0054">
    <property type="taxonomic scope" value="Bacteria"/>
</dbReference>
<dbReference type="HOGENOM" id="CLU_089358_1_2_5"/>
<dbReference type="OrthoDB" id="9809709at2"/>
<dbReference type="UniPathway" id="UPA00275">
    <property type="reaction ID" value="UER00404"/>
</dbReference>
<dbReference type="Proteomes" id="UP000002257">
    <property type="component" value="Chromosome"/>
</dbReference>
<dbReference type="GO" id="GO:0005829">
    <property type="term" value="C:cytosol"/>
    <property type="evidence" value="ECO:0007669"/>
    <property type="project" value="TreeGrafter"/>
</dbReference>
<dbReference type="GO" id="GO:0009349">
    <property type="term" value="C:riboflavin synthase complex"/>
    <property type="evidence" value="ECO:0007669"/>
    <property type="project" value="InterPro"/>
</dbReference>
<dbReference type="GO" id="GO:0000906">
    <property type="term" value="F:6,7-dimethyl-8-ribityllumazine synthase activity"/>
    <property type="evidence" value="ECO:0007669"/>
    <property type="project" value="UniProtKB-UniRule"/>
</dbReference>
<dbReference type="GO" id="GO:0009231">
    <property type="term" value="P:riboflavin biosynthetic process"/>
    <property type="evidence" value="ECO:0007669"/>
    <property type="project" value="UniProtKB-UniRule"/>
</dbReference>
<dbReference type="CDD" id="cd09209">
    <property type="entry name" value="Lumazine_synthase-I"/>
    <property type="match status" value="1"/>
</dbReference>
<dbReference type="Gene3D" id="3.40.50.960">
    <property type="entry name" value="Lumazine/riboflavin synthase"/>
    <property type="match status" value="1"/>
</dbReference>
<dbReference type="HAMAP" id="MF_00178">
    <property type="entry name" value="Lumazine_synth"/>
    <property type="match status" value="1"/>
</dbReference>
<dbReference type="InterPro" id="IPR034964">
    <property type="entry name" value="LS"/>
</dbReference>
<dbReference type="InterPro" id="IPR002180">
    <property type="entry name" value="LS/RS"/>
</dbReference>
<dbReference type="InterPro" id="IPR036467">
    <property type="entry name" value="LS/RS_sf"/>
</dbReference>
<dbReference type="NCBIfam" id="TIGR00114">
    <property type="entry name" value="lumazine-synth"/>
    <property type="match status" value="1"/>
</dbReference>
<dbReference type="PANTHER" id="PTHR21058:SF0">
    <property type="entry name" value="6,7-DIMETHYL-8-RIBITYLLUMAZINE SYNTHASE"/>
    <property type="match status" value="1"/>
</dbReference>
<dbReference type="PANTHER" id="PTHR21058">
    <property type="entry name" value="6,7-DIMETHYL-8-RIBITYLLUMAZINE SYNTHASE DMRL SYNTHASE LUMAZINE SYNTHASE"/>
    <property type="match status" value="1"/>
</dbReference>
<dbReference type="Pfam" id="PF00885">
    <property type="entry name" value="DMRL_synthase"/>
    <property type="match status" value="1"/>
</dbReference>
<dbReference type="SUPFAM" id="SSF52121">
    <property type="entry name" value="Lumazine synthase"/>
    <property type="match status" value="1"/>
</dbReference>
<evidence type="ECO:0000255" key="1">
    <source>
        <dbReference type="HAMAP-Rule" id="MF_00178"/>
    </source>
</evidence>
<organism>
    <name type="scientific">Methylocella silvestris (strain DSM 15510 / CIP 108128 / LMG 27833 / NCIMB 13906 / BL2)</name>
    <dbReference type="NCBI Taxonomy" id="395965"/>
    <lineage>
        <taxon>Bacteria</taxon>
        <taxon>Pseudomonadati</taxon>
        <taxon>Pseudomonadota</taxon>
        <taxon>Alphaproteobacteria</taxon>
        <taxon>Hyphomicrobiales</taxon>
        <taxon>Beijerinckiaceae</taxon>
        <taxon>Methylocella</taxon>
    </lineage>
</organism>
<sequence length="164" mass="17047">MAIPRRSLTELDQNAAGAHFLIVEARYYDSIGAMLLAGAKAALERARASHELVSVPGALEIPIAIEIATDQAKRAGAPFAGAVALGCVIRGETYHFEIVAAESARALMQLAVAHKLPLGNGILTVDTEAQAEERADPDRGDKGGDAARAAVALHCLARRAGALS</sequence>
<protein>
    <recommendedName>
        <fullName evidence="1">6,7-dimethyl-8-ribityllumazine synthase</fullName>
        <shortName evidence="1">DMRL synthase</shortName>
        <shortName evidence="1">LS</shortName>
        <shortName evidence="1">Lumazine synthase</shortName>
        <ecNumber evidence="1">2.5.1.78</ecNumber>
    </recommendedName>
</protein>
<name>RISB_METSB</name>
<reference key="1">
    <citation type="journal article" date="2010" name="J. Bacteriol.">
        <title>Complete genome sequence of the aerobic facultative methanotroph Methylocella silvestris BL2.</title>
        <authorList>
            <person name="Chen Y."/>
            <person name="Crombie A."/>
            <person name="Rahman M.T."/>
            <person name="Dedysh S.N."/>
            <person name="Liesack W."/>
            <person name="Stott M.B."/>
            <person name="Alam M."/>
            <person name="Theisen A.R."/>
            <person name="Murrell J.C."/>
            <person name="Dunfield P.F."/>
        </authorList>
    </citation>
    <scope>NUCLEOTIDE SEQUENCE [LARGE SCALE GENOMIC DNA]</scope>
    <source>
        <strain>DSM 15510 / CIP 108128 / LMG 27833 / NCIMB 13906 / BL2</strain>
    </source>
</reference>
<feature type="chain" id="PRO_1000195502" description="6,7-dimethyl-8-ribityllumazine synthase">
    <location>
        <begin position="1"/>
        <end position="164"/>
    </location>
</feature>
<feature type="active site" description="Proton donor" evidence="1">
    <location>
        <position position="95"/>
    </location>
</feature>
<feature type="binding site" evidence="1">
    <location>
        <position position="27"/>
    </location>
    <ligand>
        <name>5-amino-6-(D-ribitylamino)uracil</name>
        <dbReference type="ChEBI" id="CHEBI:15934"/>
    </ligand>
</feature>
<feature type="binding site" evidence="1">
    <location>
        <begin position="58"/>
        <end position="60"/>
    </location>
    <ligand>
        <name>5-amino-6-(D-ribitylamino)uracil</name>
        <dbReference type="ChEBI" id="CHEBI:15934"/>
    </ligand>
</feature>
<feature type="binding site" evidence="1">
    <location>
        <begin position="87"/>
        <end position="89"/>
    </location>
    <ligand>
        <name>5-amino-6-(D-ribitylamino)uracil</name>
        <dbReference type="ChEBI" id="CHEBI:15934"/>
    </ligand>
</feature>
<feature type="binding site" evidence="1">
    <location>
        <begin position="92"/>
        <end position="93"/>
    </location>
    <ligand>
        <name>(2S)-2-hydroxy-3-oxobutyl phosphate</name>
        <dbReference type="ChEBI" id="CHEBI:58830"/>
    </ligand>
</feature>
<feature type="binding site" evidence="1">
    <location>
        <position position="120"/>
    </location>
    <ligand>
        <name>5-amino-6-(D-ribitylamino)uracil</name>
        <dbReference type="ChEBI" id="CHEBI:15934"/>
    </ligand>
</feature>
<feature type="binding site" evidence="1">
    <location>
        <position position="134"/>
    </location>
    <ligand>
        <name>(2S)-2-hydroxy-3-oxobutyl phosphate</name>
        <dbReference type="ChEBI" id="CHEBI:58830"/>
    </ligand>
</feature>